<dbReference type="EC" id="5.3.3.2" evidence="1"/>
<dbReference type="EMBL" id="CP000034">
    <property type="protein sequence ID" value="ABB63203.1"/>
    <property type="molecule type" value="Genomic_DNA"/>
</dbReference>
<dbReference type="RefSeq" id="WP_001192818.1">
    <property type="nucleotide sequence ID" value="NC_007606.1"/>
</dbReference>
<dbReference type="RefSeq" id="YP_404694.1">
    <property type="nucleotide sequence ID" value="NC_007606.1"/>
</dbReference>
<dbReference type="SMR" id="Q32BV2"/>
<dbReference type="STRING" id="300267.SDY_3193"/>
<dbReference type="EnsemblBacteria" id="ABB63203">
    <property type="protein sequence ID" value="ABB63203"/>
    <property type="gene ID" value="SDY_3193"/>
</dbReference>
<dbReference type="KEGG" id="sdy:SDY_3193"/>
<dbReference type="PATRIC" id="fig|300267.13.peg.3815"/>
<dbReference type="HOGENOM" id="CLU_060552_2_0_6"/>
<dbReference type="UniPathway" id="UPA00059">
    <property type="reaction ID" value="UER00104"/>
</dbReference>
<dbReference type="Proteomes" id="UP000002716">
    <property type="component" value="Chromosome"/>
</dbReference>
<dbReference type="GO" id="GO:0005737">
    <property type="term" value="C:cytoplasm"/>
    <property type="evidence" value="ECO:0007669"/>
    <property type="project" value="UniProtKB-SubCell"/>
</dbReference>
<dbReference type="GO" id="GO:0004452">
    <property type="term" value="F:isopentenyl-diphosphate delta-isomerase activity"/>
    <property type="evidence" value="ECO:0007669"/>
    <property type="project" value="UniProtKB-UniRule"/>
</dbReference>
<dbReference type="GO" id="GO:0046872">
    <property type="term" value="F:metal ion binding"/>
    <property type="evidence" value="ECO:0007669"/>
    <property type="project" value="UniProtKB-KW"/>
</dbReference>
<dbReference type="GO" id="GO:0050992">
    <property type="term" value="P:dimethylallyl diphosphate biosynthetic process"/>
    <property type="evidence" value="ECO:0007669"/>
    <property type="project" value="UniProtKB-UniRule"/>
</dbReference>
<dbReference type="GO" id="GO:0008299">
    <property type="term" value="P:isoprenoid biosynthetic process"/>
    <property type="evidence" value="ECO:0007669"/>
    <property type="project" value="UniProtKB-KW"/>
</dbReference>
<dbReference type="CDD" id="cd02885">
    <property type="entry name" value="NUDIX_IPP_Isomerase"/>
    <property type="match status" value="1"/>
</dbReference>
<dbReference type="FunFam" id="3.90.79.10:FF:000009">
    <property type="entry name" value="Isopentenyl-diphosphate Delta-isomerase"/>
    <property type="match status" value="1"/>
</dbReference>
<dbReference type="Gene3D" id="3.90.79.10">
    <property type="entry name" value="Nucleoside Triphosphate Pyrophosphohydrolase"/>
    <property type="match status" value="1"/>
</dbReference>
<dbReference type="HAMAP" id="MF_00202">
    <property type="entry name" value="Idi"/>
    <property type="match status" value="1"/>
</dbReference>
<dbReference type="InterPro" id="IPR056375">
    <property type="entry name" value="Idi_bact"/>
</dbReference>
<dbReference type="InterPro" id="IPR011876">
    <property type="entry name" value="IsopentenylPP_isomerase_typ1"/>
</dbReference>
<dbReference type="InterPro" id="IPR015797">
    <property type="entry name" value="NUDIX_hydrolase-like_dom_sf"/>
</dbReference>
<dbReference type="InterPro" id="IPR000086">
    <property type="entry name" value="NUDIX_hydrolase_dom"/>
</dbReference>
<dbReference type="NCBIfam" id="TIGR02150">
    <property type="entry name" value="IPP_isom_1"/>
    <property type="match status" value="1"/>
</dbReference>
<dbReference type="NCBIfam" id="NF002995">
    <property type="entry name" value="PRK03759.1"/>
    <property type="match status" value="1"/>
</dbReference>
<dbReference type="PANTHER" id="PTHR10885">
    <property type="entry name" value="ISOPENTENYL-DIPHOSPHATE DELTA-ISOMERASE"/>
    <property type="match status" value="1"/>
</dbReference>
<dbReference type="PANTHER" id="PTHR10885:SF0">
    <property type="entry name" value="ISOPENTENYL-DIPHOSPHATE DELTA-ISOMERASE"/>
    <property type="match status" value="1"/>
</dbReference>
<dbReference type="Pfam" id="PF00293">
    <property type="entry name" value="NUDIX"/>
    <property type="match status" value="1"/>
</dbReference>
<dbReference type="PIRSF" id="PIRSF018427">
    <property type="entry name" value="Isopntndiph_ism"/>
    <property type="match status" value="1"/>
</dbReference>
<dbReference type="SUPFAM" id="SSF55811">
    <property type="entry name" value="Nudix"/>
    <property type="match status" value="1"/>
</dbReference>
<dbReference type="PROSITE" id="PS51462">
    <property type="entry name" value="NUDIX"/>
    <property type="match status" value="1"/>
</dbReference>
<accession>Q32BV2</accession>
<protein>
    <recommendedName>
        <fullName evidence="1">Isopentenyl-diphosphate Delta-isomerase</fullName>
        <shortName evidence="1">IPP isomerase</shortName>
        <ecNumber evidence="1">5.3.3.2</ecNumber>
    </recommendedName>
    <alternativeName>
        <fullName evidence="1">IPP:DMAPP isomerase</fullName>
    </alternativeName>
    <alternativeName>
        <fullName evidence="1">Isopentenyl pyrophosphate isomerase</fullName>
    </alternativeName>
</protein>
<sequence>MQTEHVILLNAQGVPTGTLEKYAAHTADTRLHLAFSSWLFNAKGQLLVTRRALSKKAWPGVWTNSVCGHPQLGESNEDAVIRRCRYELGVEITPPESIYPDFRYRATDPNGIVENEVCPVFAARTTSALQINDDEVMDYQWCDLADVLRGIDATPWAFSPWMVMQATNREARIRLSAFTQLK</sequence>
<reference key="1">
    <citation type="journal article" date="2005" name="Nucleic Acids Res.">
        <title>Genome dynamics and diversity of Shigella species, the etiologic agents of bacillary dysentery.</title>
        <authorList>
            <person name="Yang F."/>
            <person name="Yang J."/>
            <person name="Zhang X."/>
            <person name="Chen L."/>
            <person name="Jiang Y."/>
            <person name="Yan Y."/>
            <person name="Tang X."/>
            <person name="Wang J."/>
            <person name="Xiong Z."/>
            <person name="Dong J."/>
            <person name="Xue Y."/>
            <person name="Zhu Y."/>
            <person name="Xu X."/>
            <person name="Sun L."/>
            <person name="Chen S."/>
            <person name="Nie H."/>
            <person name="Peng J."/>
            <person name="Xu J."/>
            <person name="Wang Y."/>
            <person name="Yuan Z."/>
            <person name="Wen Y."/>
            <person name="Yao Z."/>
            <person name="Shen Y."/>
            <person name="Qiang B."/>
            <person name="Hou Y."/>
            <person name="Yu J."/>
            <person name="Jin Q."/>
        </authorList>
    </citation>
    <scope>NUCLEOTIDE SEQUENCE [LARGE SCALE GENOMIC DNA]</scope>
    <source>
        <strain>Sd197</strain>
    </source>
</reference>
<proteinExistence type="inferred from homology"/>
<keyword id="KW-0963">Cytoplasm</keyword>
<keyword id="KW-0413">Isomerase</keyword>
<keyword id="KW-0414">Isoprene biosynthesis</keyword>
<keyword id="KW-0460">Magnesium</keyword>
<keyword id="KW-0464">Manganese</keyword>
<keyword id="KW-0479">Metal-binding</keyword>
<keyword id="KW-1185">Reference proteome</keyword>
<comment type="function">
    <text evidence="1">Catalyzes the 1,3-allylic rearrangement of the homoallylic substrate isopentenyl (IPP) to its highly electrophilic allylic isomer, dimethylallyl diphosphate (DMAPP).</text>
</comment>
<comment type="catalytic activity">
    <reaction evidence="1">
        <text>isopentenyl diphosphate = dimethylallyl diphosphate</text>
        <dbReference type="Rhea" id="RHEA:23284"/>
        <dbReference type="ChEBI" id="CHEBI:57623"/>
        <dbReference type="ChEBI" id="CHEBI:128769"/>
        <dbReference type="EC" id="5.3.3.2"/>
    </reaction>
</comment>
<comment type="cofactor">
    <cofactor evidence="1">
        <name>Mg(2+)</name>
        <dbReference type="ChEBI" id="CHEBI:18420"/>
    </cofactor>
    <text evidence="1">Binds 1 Mg(2+) ion per subunit. The magnesium ion binds only when substrate is bound.</text>
</comment>
<comment type="cofactor">
    <cofactor evidence="1">
        <name>Mn(2+)</name>
        <dbReference type="ChEBI" id="CHEBI:29035"/>
    </cofactor>
    <text evidence="1">Binds 1 Mn(2+) ion per subunit.</text>
</comment>
<comment type="pathway">
    <text evidence="1">Isoprenoid biosynthesis; dimethylallyl diphosphate biosynthesis; dimethylallyl diphosphate from isopentenyl diphosphate: step 1/1.</text>
</comment>
<comment type="subunit">
    <text evidence="1">Homodimer.</text>
</comment>
<comment type="subcellular location">
    <subcellularLocation>
        <location evidence="1">Cytoplasm</location>
    </subcellularLocation>
</comment>
<comment type="similarity">
    <text evidence="1">Belongs to the IPP isomerase type 1 family.</text>
</comment>
<feature type="chain" id="PRO_0000227128" description="Isopentenyl-diphosphate Delta-isomerase">
    <location>
        <begin position="1"/>
        <end position="182"/>
    </location>
</feature>
<feature type="domain" description="Nudix hydrolase">
    <location>
        <begin position="30"/>
        <end position="164"/>
    </location>
</feature>
<feature type="active site" evidence="1">
    <location>
        <position position="67"/>
    </location>
</feature>
<feature type="active site" evidence="1">
    <location>
        <position position="116"/>
    </location>
</feature>
<feature type="binding site" evidence="1">
    <location>
        <position position="25"/>
    </location>
    <ligand>
        <name>Mn(2+)</name>
        <dbReference type="ChEBI" id="CHEBI:29035"/>
    </ligand>
</feature>
<feature type="binding site" evidence="1">
    <location>
        <position position="32"/>
    </location>
    <ligand>
        <name>Mn(2+)</name>
        <dbReference type="ChEBI" id="CHEBI:29035"/>
    </ligand>
</feature>
<feature type="binding site" evidence="1">
    <location>
        <position position="67"/>
    </location>
    <ligand>
        <name>Mg(2+)</name>
        <dbReference type="ChEBI" id="CHEBI:18420"/>
    </ligand>
</feature>
<feature type="binding site" evidence="1">
    <location>
        <position position="69"/>
    </location>
    <ligand>
        <name>Mn(2+)</name>
        <dbReference type="ChEBI" id="CHEBI:29035"/>
    </ligand>
</feature>
<feature type="binding site" evidence="1">
    <location>
        <position position="87"/>
    </location>
    <ligand>
        <name>Mg(2+)</name>
        <dbReference type="ChEBI" id="CHEBI:18420"/>
    </ligand>
</feature>
<feature type="binding site" evidence="1">
    <location>
        <position position="114"/>
    </location>
    <ligand>
        <name>Mn(2+)</name>
        <dbReference type="ChEBI" id="CHEBI:29035"/>
    </ligand>
</feature>
<feature type="binding site" evidence="1">
    <location>
        <position position="116"/>
    </location>
    <ligand>
        <name>Mn(2+)</name>
        <dbReference type="ChEBI" id="CHEBI:29035"/>
    </ligand>
</feature>
<gene>
    <name evidence="1" type="primary">idi</name>
    <name type="ordered locus">SDY_3193</name>
</gene>
<name>IDI_SHIDS</name>
<evidence type="ECO:0000255" key="1">
    <source>
        <dbReference type="HAMAP-Rule" id="MF_00202"/>
    </source>
</evidence>
<organism>
    <name type="scientific">Shigella dysenteriae serotype 1 (strain Sd197)</name>
    <dbReference type="NCBI Taxonomy" id="300267"/>
    <lineage>
        <taxon>Bacteria</taxon>
        <taxon>Pseudomonadati</taxon>
        <taxon>Pseudomonadota</taxon>
        <taxon>Gammaproteobacteria</taxon>
        <taxon>Enterobacterales</taxon>
        <taxon>Enterobacteriaceae</taxon>
        <taxon>Shigella</taxon>
    </lineage>
</organism>